<keyword id="KW-0050">Antiport</keyword>
<keyword id="KW-0406">Ion transport</keyword>
<keyword id="KW-0472">Membrane</keyword>
<keyword id="KW-0630">Potassium</keyword>
<keyword id="KW-0633">Potassium transport</keyword>
<keyword id="KW-1185">Reference proteome</keyword>
<keyword id="KW-0812">Transmembrane</keyword>
<keyword id="KW-1133">Transmembrane helix</keyword>
<keyword id="KW-0813">Transport</keyword>
<organism>
    <name type="scientific">Arabidopsis thaliana</name>
    <name type="common">Mouse-ear cress</name>
    <dbReference type="NCBI Taxonomy" id="3702"/>
    <lineage>
        <taxon>Eukaryota</taxon>
        <taxon>Viridiplantae</taxon>
        <taxon>Streptophyta</taxon>
        <taxon>Embryophyta</taxon>
        <taxon>Tracheophyta</taxon>
        <taxon>Spermatophyta</taxon>
        <taxon>Magnoliopsida</taxon>
        <taxon>eudicotyledons</taxon>
        <taxon>Gunneridae</taxon>
        <taxon>Pentapetalae</taxon>
        <taxon>rosids</taxon>
        <taxon>malvids</taxon>
        <taxon>Brassicales</taxon>
        <taxon>Brassicaceae</taxon>
        <taxon>Camelineae</taxon>
        <taxon>Arabidopsis</taxon>
    </lineage>
</organism>
<protein>
    <recommendedName>
        <fullName>Cation/H(+) antiporter 6A</fullName>
    </recommendedName>
    <alternativeName>
        <fullName>Protein CATION/H+ EXCHANGER 6a</fullName>
        <shortName>AtCHX6a</shortName>
    </alternativeName>
</protein>
<proteinExistence type="evidence at transcript level"/>
<name>CHX6A_ARATH</name>
<feature type="chain" id="PRO_0000394976" description="Cation/H(+) antiporter 6A">
    <location>
        <begin position="1"/>
        <end position="818"/>
    </location>
</feature>
<feature type="transmembrane region" description="Helical" evidence="2">
    <location>
        <begin position="51"/>
        <end position="71"/>
    </location>
</feature>
<feature type="transmembrane region" description="Helical" evidence="2">
    <location>
        <begin position="88"/>
        <end position="110"/>
    </location>
</feature>
<feature type="transmembrane region" description="Helical" evidence="2">
    <location>
        <begin position="123"/>
        <end position="143"/>
    </location>
</feature>
<feature type="transmembrane region" description="Helical" evidence="2">
    <location>
        <begin position="156"/>
        <end position="176"/>
    </location>
</feature>
<feature type="transmembrane region" description="Helical" evidence="2">
    <location>
        <begin position="192"/>
        <end position="212"/>
    </location>
</feature>
<feature type="transmembrane region" description="Helical" evidence="2">
    <location>
        <begin position="222"/>
        <end position="242"/>
    </location>
</feature>
<feature type="transmembrane region" description="Helical" evidence="2">
    <location>
        <begin position="248"/>
        <end position="268"/>
    </location>
</feature>
<feature type="transmembrane region" description="Helical" evidence="2">
    <location>
        <begin position="288"/>
        <end position="308"/>
    </location>
</feature>
<feature type="transmembrane region" description="Helical" evidence="2">
    <location>
        <begin position="310"/>
        <end position="330"/>
    </location>
</feature>
<feature type="transmembrane region" description="Helical" evidence="2">
    <location>
        <begin position="340"/>
        <end position="360"/>
    </location>
</feature>
<feature type="transmembrane region" description="Helical" evidence="2">
    <location>
        <begin position="376"/>
        <end position="396"/>
    </location>
</feature>
<feature type="transmembrane region" description="Helical" evidence="2">
    <location>
        <begin position="409"/>
        <end position="429"/>
    </location>
</feature>
<feature type="transmembrane region" description="Helical" evidence="2">
    <location>
        <begin position="438"/>
        <end position="458"/>
    </location>
</feature>
<feature type="sequence conflict" description="In Ref. 3; BAC42972 and 4; BAD43750/BAD43761/BAF01787/BAF01797." evidence="4" ref="3 4">
    <original>L</original>
    <variation>S</variation>
    <location>
        <position position="147"/>
    </location>
</feature>
<feature type="sequence conflict" description="In Ref. 4; BAF01797/BAD43750." evidence="4" ref="4">
    <original>E</original>
    <variation>G</variation>
    <location>
        <position position="152"/>
    </location>
</feature>
<feature type="sequence conflict" description="In Ref. 3; BAC42972 and 4; BAD43750/BAD43761/BAF01787/BAF01797." evidence="4" ref="3 4">
    <original>L</original>
    <variation>I</variation>
    <location>
        <position position="488"/>
    </location>
</feature>
<reference key="1">
    <citation type="journal article" date="2000" name="Nature">
        <title>Sequence and analysis of chromosome 1 of the plant Arabidopsis thaliana.</title>
        <authorList>
            <person name="Theologis A."/>
            <person name="Ecker J.R."/>
            <person name="Palm C.J."/>
            <person name="Federspiel N.A."/>
            <person name="Kaul S."/>
            <person name="White O."/>
            <person name="Alonso J."/>
            <person name="Altafi H."/>
            <person name="Araujo R."/>
            <person name="Bowman C.L."/>
            <person name="Brooks S.Y."/>
            <person name="Buehler E."/>
            <person name="Chan A."/>
            <person name="Chao Q."/>
            <person name="Chen H."/>
            <person name="Cheuk R.F."/>
            <person name="Chin C.W."/>
            <person name="Chung M.K."/>
            <person name="Conn L."/>
            <person name="Conway A.B."/>
            <person name="Conway A.R."/>
            <person name="Creasy T.H."/>
            <person name="Dewar K."/>
            <person name="Dunn P."/>
            <person name="Etgu P."/>
            <person name="Feldblyum T.V."/>
            <person name="Feng J.-D."/>
            <person name="Fong B."/>
            <person name="Fujii C.Y."/>
            <person name="Gill J.E."/>
            <person name="Goldsmith A.D."/>
            <person name="Haas B."/>
            <person name="Hansen N.F."/>
            <person name="Hughes B."/>
            <person name="Huizar L."/>
            <person name="Hunter J.L."/>
            <person name="Jenkins J."/>
            <person name="Johnson-Hopson C."/>
            <person name="Khan S."/>
            <person name="Khaykin E."/>
            <person name="Kim C.J."/>
            <person name="Koo H.L."/>
            <person name="Kremenetskaia I."/>
            <person name="Kurtz D.B."/>
            <person name="Kwan A."/>
            <person name="Lam B."/>
            <person name="Langin-Hooper S."/>
            <person name="Lee A."/>
            <person name="Lee J.M."/>
            <person name="Lenz C.A."/>
            <person name="Li J.H."/>
            <person name="Li Y.-P."/>
            <person name="Lin X."/>
            <person name="Liu S.X."/>
            <person name="Liu Z.A."/>
            <person name="Luros J.S."/>
            <person name="Maiti R."/>
            <person name="Marziali A."/>
            <person name="Militscher J."/>
            <person name="Miranda M."/>
            <person name="Nguyen M."/>
            <person name="Nierman W.C."/>
            <person name="Osborne B.I."/>
            <person name="Pai G."/>
            <person name="Peterson J."/>
            <person name="Pham P.K."/>
            <person name="Rizzo M."/>
            <person name="Rooney T."/>
            <person name="Rowley D."/>
            <person name="Sakano H."/>
            <person name="Salzberg S.L."/>
            <person name="Schwartz J.R."/>
            <person name="Shinn P."/>
            <person name="Southwick A.M."/>
            <person name="Sun H."/>
            <person name="Tallon L.J."/>
            <person name="Tambunga G."/>
            <person name="Toriumi M.J."/>
            <person name="Town C.D."/>
            <person name="Utterback T."/>
            <person name="Van Aken S."/>
            <person name="Vaysberg M."/>
            <person name="Vysotskaia V.S."/>
            <person name="Walker M."/>
            <person name="Wu D."/>
            <person name="Yu G."/>
            <person name="Fraser C.M."/>
            <person name="Venter J.C."/>
            <person name="Davis R.W."/>
        </authorList>
    </citation>
    <scope>NUCLEOTIDE SEQUENCE [LARGE SCALE GENOMIC DNA]</scope>
    <source>
        <strain>cv. Columbia</strain>
    </source>
</reference>
<reference key="2">
    <citation type="journal article" date="2017" name="Plant J.">
        <title>Araport11: a complete reannotation of the Arabidopsis thaliana reference genome.</title>
        <authorList>
            <person name="Cheng C.Y."/>
            <person name="Krishnakumar V."/>
            <person name="Chan A.P."/>
            <person name="Thibaud-Nissen F."/>
            <person name="Schobel S."/>
            <person name="Town C.D."/>
        </authorList>
    </citation>
    <scope>GENOME REANNOTATION</scope>
    <source>
        <strain>cv. Columbia</strain>
    </source>
</reference>
<reference key="3">
    <citation type="journal article" date="2002" name="Science">
        <title>Functional annotation of a full-length Arabidopsis cDNA collection.</title>
        <authorList>
            <person name="Seki M."/>
            <person name="Narusaka M."/>
            <person name="Kamiya A."/>
            <person name="Ishida J."/>
            <person name="Satou M."/>
            <person name="Sakurai T."/>
            <person name="Nakajima M."/>
            <person name="Enju A."/>
            <person name="Akiyama K."/>
            <person name="Oono Y."/>
            <person name="Muramatsu M."/>
            <person name="Hayashizaki Y."/>
            <person name="Kawai J."/>
            <person name="Carninci P."/>
            <person name="Itoh M."/>
            <person name="Ishii Y."/>
            <person name="Arakawa T."/>
            <person name="Shibata K."/>
            <person name="Shinagawa A."/>
            <person name="Shinozaki K."/>
        </authorList>
    </citation>
    <scope>NUCLEOTIDE SEQUENCE [LARGE SCALE MRNA]</scope>
    <source>
        <strain>cv. Columbia</strain>
    </source>
</reference>
<reference key="4">
    <citation type="submission" date="2006-07" db="EMBL/GenBank/DDBJ databases">
        <title>Large-scale analysis of RIKEN Arabidopsis full-length (RAFL) cDNAs.</title>
        <authorList>
            <person name="Totoki Y."/>
            <person name="Seki M."/>
            <person name="Ishida J."/>
            <person name="Nakajima M."/>
            <person name="Enju A."/>
            <person name="Kamiya A."/>
            <person name="Narusaka M."/>
            <person name="Shin-i T."/>
            <person name="Nakagawa M."/>
            <person name="Sakamoto N."/>
            <person name="Oishi K."/>
            <person name="Kohara Y."/>
            <person name="Kobayashi M."/>
            <person name="Toyoda A."/>
            <person name="Sakaki Y."/>
            <person name="Sakurai T."/>
            <person name="Iida K."/>
            <person name="Akiyama K."/>
            <person name="Satou M."/>
            <person name="Toyoda T."/>
            <person name="Konagaya A."/>
            <person name="Carninci P."/>
            <person name="Kawai J."/>
            <person name="Hayashizaki Y."/>
            <person name="Shinozaki K."/>
        </authorList>
    </citation>
    <scope>NUCLEOTIDE SEQUENCE [LARGE SCALE MRNA]</scope>
    <source>
        <strain>cv. Columbia</strain>
    </source>
</reference>
<reference key="5">
    <citation type="journal article" date="2004" name="Plant Physiol.">
        <title>Expression patterns of a novel AtCHX gene family highlight potential roles in osmotic adjustment and K+ homeostasis in pollen development.</title>
        <authorList>
            <person name="Sze H."/>
            <person name="Padmanaban S."/>
            <person name="Cellier F."/>
            <person name="Honys D."/>
            <person name="Cheng N.-H."/>
            <person name="Bock K.W."/>
            <person name="Conejero G."/>
            <person name="Li X."/>
            <person name="Twell D."/>
            <person name="Ward J.M."/>
            <person name="Hirschi K.D."/>
        </authorList>
    </citation>
    <scope>NUCLEOTIDE SEQUENCE [MRNA] OF 1-810</scope>
    <scope>TISSUE SPECIFICITY</scope>
    <scope>GENE FAMILY</scope>
    <scope>NOMENCLATURE</scope>
    <source>
        <tissue>Pollen</tissue>
    </source>
</reference>
<reference key="6">
    <citation type="journal article" date="2001" name="Plant Physiol.">
        <title>Phylogenetic relationships within cation transporter families of Arabidopsis.</title>
        <authorList>
            <person name="Maeser P."/>
            <person name="Thomine S."/>
            <person name="Schroeder J.I."/>
            <person name="Ward J.M."/>
            <person name="Hirschi K."/>
            <person name="Sze H."/>
            <person name="Talke I.N."/>
            <person name="Amtmann A."/>
            <person name="Maathuis F.J.M."/>
            <person name="Sanders D."/>
            <person name="Harper J.F."/>
            <person name="Tchieu J."/>
            <person name="Gribskov M."/>
            <person name="Persans M.W."/>
            <person name="Salt D.E."/>
            <person name="Kim S.A."/>
            <person name="Guerinot M.L."/>
        </authorList>
    </citation>
    <scope>GENE FAMILY</scope>
    <scope>NOMENCLATURE</scope>
</reference>
<comment type="function">
    <text evidence="1">May operate as a cation/H(+) antiporter.</text>
</comment>
<comment type="subcellular location">
    <subcellularLocation>
        <location evidence="1">Membrane</location>
        <topology evidence="1">Multi-pass membrane protein</topology>
    </subcellularLocation>
</comment>
<comment type="tissue specificity">
    <text evidence="3">Preferentially expressed in pollen.</text>
</comment>
<comment type="similarity">
    <text evidence="4">Belongs to the monovalent cation:proton antiporter 2 (CPA2) transporter (TC 2.A.37) family. CHX (TC 2.A.37.4) subfamily.</text>
</comment>
<comment type="sequence caution" evidence="4">
    <conflict type="erroneous gene model prediction">
        <sequence resource="EMBL-CDS" id="AAF18257"/>
    </conflict>
    <text>The predicted gene has been split into 4 genes: At1g08135, At1g08140, At1g08150 and At1g08160.</text>
</comment>
<comment type="sequence caution" evidence="4">
    <conflict type="erroneous gene model prediction">
        <sequence resource="EMBL-CDS" id="AAF79832"/>
    </conflict>
    <text>The predicted gene has been split into 4 genes: At1g08135, At1g08140, At1g08150 and At1g08160.</text>
</comment>
<gene>
    <name type="primary">CHX6a</name>
    <name type="synonym">CHX06a</name>
    <name type="ordered locus">At1g08140</name>
    <name type="ORF">T23G18.2</name>
    <name type="ORF">T6D22.24</name>
</gene>
<evidence type="ECO:0000250" key="1"/>
<evidence type="ECO:0000255" key="2"/>
<evidence type="ECO:0000269" key="3">
    <source>
    </source>
</evidence>
<evidence type="ECO:0000305" key="4"/>
<dbReference type="EMBL" id="AC011438">
    <property type="protein sequence ID" value="AAF18257.1"/>
    <property type="status" value="ALT_SEQ"/>
    <property type="molecule type" value="Genomic_DNA"/>
</dbReference>
<dbReference type="EMBL" id="AC026875">
    <property type="protein sequence ID" value="AAF79832.1"/>
    <property type="status" value="ALT_SEQ"/>
    <property type="molecule type" value="Genomic_DNA"/>
</dbReference>
<dbReference type="EMBL" id="CP002684">
    <property type="protein sequence ID" value="AEE28253.1"/>
    <property type="molecule type" value="Genomic_DNA"/>
</dbReference>
<dbReference type="EMBL" id="AK118358">
    <property type="protein sequence ID" value="BAC42972.1"/>
    <property type="molecule type" value="mRNA"/>
</dbReference>
<dbReference type="EMBL" id="AK175987">
    <property type="protein sequence ID" value="BAD43750.1"/>
    <property type="molecule type" value="mRNA"/>
</dbReference>
<dbReference type="EMBL" id="AK175998">
    <property type="protein sequence ID" value="BAD43761.1"/>
    <property type="molecule type" value="mRNA"/>
</dbReference>
<dbReference type="EMBL" id="AK229961">
    <property type="protein sequence ID" value="BAF01787.1"/>
    <property type="molecule type" value="mRNA"/>
</dbReference>
<dbReference type="EMBL" id="AK229972">
    <property type="protein sequence ID" value="BAF01797.1"/>
    <property type="molecule type" value="mRNA"/>
</dbReference>
<dbReference type="EMBL" id="AY926467">
    <property type="protein sequence ID" value="AAX49539.1"/>
    <property type="molecule type" value="mRNA"/>
</dbReference>
<dbReference type="PIR" id="A86216">
    <property type="entry name" value="A86216"/>
</dbReference>
<dbReference type="RefSeq" id="NP_849611.1">
    <property type="nucleotide sequence ID" value="NM_179280.4"/>
</dbReference>
<dbReference type="BioGRID" id="22576">
    <property type="interactions" value="10"/>
</dbReference>
<dbReference type="IntAct" id="Q8GX92">
    <property type="interactions" value="9"/>
</dbReference>
<dbReference type="PaxDb" id="3702-AT1G08140.1"/>
<dbReference type="ProteomicsDB" id="246975"/>
<dbReference type="EnsemblPlants" id="AT1G08140.1">
    <property type="protein sequence ID" value="AT1G08140.1"/>
    <property type="gene ID" value="AT1G08140"/>
</dbReference>
<dbReference type="GeneID" id="837335"/>
<dbReference type="Gramene" id="AT1G08140.1">
    <property type="protein sequence ID" value="AT1G08140.1"/>
    <property type="gene ID" value="AT1G08140"/>
</dbReference>
<dbReference type="KEGG" id="ath:AT1G08140"/>
<dbReference type="Araport" id="AT1G08140"/>
<dbReference type="TAIR" id="AT1G08140">
    <property type="gene designation" value="CHX6A"/>
</dbReference>
<dbReference type="eggNOG" id="KOG1650">
    <property type="taxonomic scope" value="Eukaryota"/>
</dbReference>
<dbReference type="HOGENOM" id="CLU_005126_6_1_1"/>
<dbReference type="InParanoid" id="Q8GX92"/>
<dbReference type="OMA" id="DSPMACN"/>
<dbReference type="OrthoDB" id="1938353at2759"/>
<dbReference type="PRO" id="PR:Q8GX92"/>
<dbReference type="Proteomes" id="UP000006548">
    <property type="component" value="Chromosome 1"/>
</dbReference>
<dbReference type="ExpressionAtlas" id="Q8GX92">
    <property type="expression patterns" value="baseline and differential"/>
</dbReference>
<dbReference type="GO" id="GO:0016020">
    <property type="term" value="C:membrane"/>
    <property type="evidence" value="ECO:0007669"/>
    <property type="project" value="UniProtKB-SubCell"/>
</dbReference>
<dbReference type="GO" id="GO:0015297">
    <property type="term" value="F:antiporter activity"/>
    <property type="evidence" value="ECO:0007669"/>
    <property type="project" value="UniProtKB-KW"/>
</dbReference>
<dbReference type="GO" id="GO:0006812">
    <property type="term" value="P:monoatomic cation transport"/>
    <property type="evidence" value="ECO:0000305"/>
    <property type="project" value="TAIR"/>
</dbReference>
<dbReference type="GO" id="GO:0006813">
    <property type="term" value="P:potassium ion transport"/>
    <property type="evidence" value="ECO:0007669"/>
    <property type="project" value="UniProtKB-KW"/>
</dbReference>
<dbReference type="GO" id="GO:1902600">
    <property type="term" value="P:proton transmembrane transport"/>
    <property type="evidence" value="ECO:0007669"/>
    <property type="project" value="InterPro"/>
</dbReference>
<dbReference type="Gene3D" id="1.20.1530.20">
    <property type="match status" value="1"/>
</dbReference>
<dbReference type="InterPro" id="IPR006153">
    <property type="entry name" value="Cation/H_exchanger_TM"/>
</dbReference>
<dbReference type="InterPro" id="IPR050794">
    <property type="entry name" value="CPA2_transporter"/>
</dbReference>
<dbReference type="InterPro" id="IPR038770">
    <property type="entry name" value="Na+/solute_symporter_sf"/>
</dbReference>
<dbReference type="PANTHER" id="PTHR32468">
    <property type="entry name" value="CATION/H + ANTIPORTER"/>
    <property type="match status" value="1"/>
</dbReference>
<dbReference type="PANTHER" id="PTHR32468:SF73">
    <property type="entry name" value="CATION_H(+) ANTIPORTER 6A-RELATED"/>
    <property type="match status" value="1"/>
</dbReference>
<dbReference type="Pfam" id="PF23259">
    <property type="entry name" value="CHX17_C"/>
    <property type="match status" value="1"/>
</dbReference>
<dbReference type="Pfam" id="PF00999">
    <property type="entry name" value="Na_H_Exchanger"/>
    <property type="match status" value="1"/>
</dbReference>
<accession>Q8GX92</accession>
<accession>Q58P72</accession>
<accession>Q67ZY0</accession>
<accession>Q9LMZ3</accession>
<accession>Q9SGE4</accession>
<sequence length="818" mass="93395">MATEEIDMSYWDVSWGEFNEDKNSSIFCESHPHIVNSHGIWEVMTFKRGMNFWEYPLPNLEILIFSTFFIWRLLDISFNKIGLRVPRFTYMMIAGIILGQTCHFSNKSWIHDIFFPDDNRPKVAETLGAFGFVLYWFLKGVTMDAELPFRTEKRSSVIGFITVIIPLICGSLTFRYRERRGDSSILRMEYRLIIFLQSISAFTSIDTLLKDLQIKHSEFGRIALSGAMVTDMLAFGVTFFNAIYYEKLYGFMQTVGFCLFVVVMICVVRPAMYWVIKQTPEGRPVKDFYLYSIFGIAFACFTFFNKVIHLFGPAGSFVFGLTVPNGYPLGTTLIQKFESFNLGSILPLFGSLTMMQVDLLRLFKESGDLIRMEGQIYEVISFILLVNTTKFVVTTITAYAFKMPLRDSFALALVLSNKGIFELAYYTYAVELKLIRPEVFTILAAYTLLNSIFIPMLLELVHDPTKRFRCYRKRNLGILKDGAALQCLMCVYRPDHITSMTDLLETFSPSQDSPMACNILHLVELVGQANPMFISHQLQKPEPGSTSLSDNVIISFRGFQRQFFEYTSLDIFTSVSVSQHMHEDICWLALSRSLSLIVLPFHRTWSVDRSTVISNDDNLRMLNVNVLRRAPCSVGIFVYRKPIVESHMAKSHSKICLIFNGGKDDREALAITNRMRLTEKRTRLTIIRFIPKSSEMDNDEWEQQQSINLKESVTSIVGSNIKENDAKVTYIDKAVSDGSETSRILRAMANDYDLFIVGSGSGIGTEATSGISEWTEFNELGPIGDLLASHEYPSSASVLVVQKQVYIHHTKSQRRKSF</sequence>